<sequence length="326" mass="36007">MNTPTATLNAPAADAESAAASAADKKAAFELNKLSKRLHRQVGQAITDFNMIQEGDRVMVCLSGGKDSYGMLDILLGLQQRAPITFSIVAVNLDQKQPGFPEHILPAYLKARGVEFHIENQDTYSIVKRVIPEGKTMCSLCSRLRRGILYRVADELGATKIALGHHRDDFLGTVFLNMFFGSKLKGMPPKLVSDDGRHTVIRPLAYVAETDLERWAEHRAFPIIPCTLCGTQDNLQRVQIKHMLRDWDQRFPGRIDNMHRAFSQVVPSHLMDRALFPFETLVPTGVADPAGDRAFDEDDSELCAPSGSADAAGDEVSVPVALIRRV</sequence>
<comment type="function">
    <text evidence="1">Catalyzes the ATP-dependent 2-thiolation of cytidine in position 32 of tRNA, to form 2-thiocytidine (s(2)C32). The sulfur atoms are provided by the cysteine/cysteine desulfurase (IscS) system.</text>
</comment>
<comment type="catalytic activity">
    <reaction evidence="1">
        <text>cytidine(32) in tRNA + S-sulfanyl-L-cysteinyl-[cysteine desulfurase] + AH2 + ATP = 2-thiocytidine(32) in tRNA + L-cysteinyl-[cysteine desulfurase] + A + AMP + diphosphate + H(+)</text>
        <dbReference type="Rhea" id="RHEA:57048"/>
        <dbReference type="Rhea" id="RHEA-COMP:10288"/>
        <dbReference type="Rhea" id="RHEA-COMP:12157"/>
        <dbReference type="Rhea" id="RHEA-COMP:12158"/>
        <dbReference type="Rhea" id="RHEA-COMP:14821"/>
        <dbReference type="ChEBI" id="CHEBI:13193"/>
        <dbReference type="ChEBI" id="CHEBI:15378"/>
        <dbReference type="ChEBI" id="CHEBI:17499"/>
        <dbReference type="ChEBI" id="CHEBI:29950"/>
        <dbReference type="ChEBI" id="CHEBI:30616"/>
        <dbReference type="ChEBI" id="CHEBI:33019"/>
        <dbReference type="ChEBI" id="CHEBI:61963"/>
        <dbReference type="ChEBI" id="CHEBI:82748"/>
        <dbReference type="ChEBI" id="CHEBI:141453"/>
        <dbReference type="ChEBI" id="CHEBI:456215"/>
    </reaction>
    <physiologicalReaction direction="left-to-right" evidence="1">
        <dbReference type="Rhea" id="RHEA:57049"/>
    </physiologicalReaction>
</comment>
<comment type="cofactor">
    <cofactor evidence="1">
        <name>Mg(2+)</name>
        <dbReference type="ChEBI" id="CHEBI:18420"/>
    </cofactor>
</comment>
<comment type="cofactor">
    <cofactor evidence="1">
        <name>[4Fe-4S] cluster</name>
        <dbReference type="ChEBI" id="CHEBI:49883"/>
    </cofactor>
    <text evidence="1">Binds 1 [4Fe-4S] cluster per subunit. The cluster is chelated by three Cys residues, the fourth Fe has a free coordination site that may bind a sulfur atom transferred from the persulfide of IscS.</text>
</comment>
<comment type="pathway">
    <text evidence="1">tRNA modification.</text>
</comment>
<comment type="subunit">
    <text evidence="1">Homodimer.</text>
</comment>
<comment type="subcellular location">
    <subcellularLocation>
        <location evidence="1">Cytoplasm</location>
    </subcellularLocation>
</comment>
<comment type="miscellaneous">
    <text evidence="1">The thiolation reaction likely consists of two steps: a first activation step by ATP to form an adenylated intermediate of the target base of tRNA, and a second nucleophilic substitution step of the sulfur (S) atom supplied by the hydrosulfide attached to the Fe-S cluster.</text>
</comment>
<comment type="similarity">
    <text evidence="1">Belongs to the TtcA family.</text>
</comment>
<organism>
    <name type="scientific">Leptothrix cholodnii (strain ATCC 51168 / LMG 8142 / SP-6)</name>
    <name type="common">Leptothrix discophora (strain SP-6)</name>
    <dbReference type="NCBI Taxonomy" id="395495"/>
    <lineage>
        <taxon>Bacteria</taxon>
        <taxon>Pseudomonadati</taxon>
        <taxon>Pseudomonadota</taxon>
        <taxon>Betaproteobacteria</taxon>
        <taxon>Burkholderiales</taxon>
        <taxon>Sphaerotilaceae</taxon>
        <taxon>Leptothrix</taxon>
    </lineage>
</organism>
<evidence type="ECO:0000255" key="1">
    <source>
        <dbReference type="HAMAP-Rule" id="MF_01850"/>
    </source>
</evidence>
<keyword id="KW-0004">4Fe-4S</keyword>
<keyword id="KW-0067">ATP-binding</keyword>
<keyword id="KW-0963">Cytoplasm</keyword>
<keyword id="KW-0408">Iron</keyword>
<keyword id="KW-0411">Iron-sulfur</keyword>
<keyword id="KW-0460">Magnesium</keyword>
<keyword id="KW-0479">Metal-binding</keyword>
<keyword id="KW-0547">Nucleotide-binding</keyword>
<keyword id="KW-1185">Reference proteome</keyword>
<keyword id="KW-0694">RNA-binding</keyword>
<keyword id="KW-0808">Transferase</keyword>
<keyword id="KW-0819">tRNA processing</keyword>
<keyword id="KW-0820">tRNA-binding</keyword>
<name>TTCA_LEPCP</name>
<proteinExistence type="inferred from homology"/>
<dbReference type="EC" id="2.8.1.-" evidence="1"/>
<dbReference type="EMBL" id="CP001013">
    <property type="protein sequence ID" value="ACB32376.1"/>
    <property type="molecule type" value="Genomic_DNA"/>
</dbReference>
<dbReference type="RefSeq" id="WP_012345138.1">
    <property type="nucleotide sequence ID" value="NC_010524.1"/>
</dbReference>
<dbReference type="SMR" id="B1Y629"/>
<dbReference type="STRING" id="395495.Lcho_0101"/>
<dbReference type="KEGG" id="lch:Lcho_0101"/>
<dbReference type="eggNOG" id="COG0037">
    <property type="taxonomic scope" value="Bacteria"/>
</dbReference>
<dbReference type="HOGENOM" id="CLU_026481_0_0_4"/>
<dbReference type="OrthoDB" id="9801054at2"/>
<dbReference type="Proteomes" id="UP000001693">
    <property type="component" value="Chromosome"/>
</dbReference>
<dbReference type="GO" id="GO:0005737">
    <property type="term" value="C:cytoplasm"/>
    <property type="evidence" value="ECO:0007669"/>
    <property type="project" value="UniProtKB-SubCell"/>
</dbReference>
<dbReference type="GO" id="GO:0051539">
    <property type="term" value="F:4 iron, 4 sulfur cluster binding"/>
    <property type="evidence" value="ECO:0007669"/>
    <property type="project" value="UniProtKB-UniRule"/>
</dbReference>
<dbReference type="GO" id="GO:0005524">
    <property type="term" value="F:ATP binding"/>
    <property type="evidence" value="ECO:0007669"/>
    <property type="project" value="UniProtKB-UniRule"/>
</dbReference>
<dbReference type="GO" id="GO:0000287">
    <property type="term" value="F:magnesium ion binding"/>
    <property type="evidence" value="ECO:0007669"/>
    <property type="project" value="UniProtKB-UniRule"/>
</dbReference>
<dbReference type="GO" id="GO:0016783">
    <property type="term" value="F:sulfurtransferase activity"/>
    <property type="evidence" value="ECO:0007669"/>
    <property type="project" value="UniProtKB-UniRule"/>
</dbReference>
<dbReference type="GO" id="GO:0000049">
    <property type="term" value="F:tRNA binding"/>
    <property type="evidence" value="ECO:0007669"/>
    <property type="project" value="UniProtKB-KW"/>
</dbReference>
<dbReference type="GO" id="GO:0034227">
    <property type="term" value="P:tRNA thio-modification"/>
    <property type="evidence" value="ECO:0007669"/>
    <property type="project" value="UniProtKB-UniRule"/>
</dbReference>
<dbReference type="CDD" id="cd24138">
    <property type="entry name" value="TtcA-like"/>
    <property type="match status" value="1"/>
</dbReference>
<dbReference type="Gene3D" id="3.40.50.620">
    <property type="entry name" value="HUPs"/>
    <property type="match status" value="1"/>
</dbReference>
<dbReference type="HAMAP" id="MF_01850">
    <property type="entry name" value="TtcA"/>
    <property type="match status" value="1"/>
</dbReference>
<dbReference type="InterPro" id="IPR014729">
    <property type="entry name" value="Rossmann-like_a/b/a_fold"/>
</dbReference>
<dbReference type="InterPro" id="IPR011063">
    <property type="entry name" value="TilS/TtcA_N"/>
</dbReference>
<dbReference type="InterPro" id="IPR012089">
    <property type="entry name" value="tRNA_Cyd_32_2_STrfase"/>
</dbReference>
<dbReference type="NCBIfam" id="NF007972">
    <property type="entry name" value="PRK10696.1"/>
    <property type="match status" value="1"/>
</dbReference>
<dbReference type="PANTHER" id="PTHR43686:SF1">
    <property type="entry name" value="AMINOTRAN_5 DOMAIN-CONTAINING PROTEIN"/>
    <property type="match status" value="1"/>
</dbReference>
<dbReference type="PANTHER" id="PTHR43686">
    <property type="entry name" value="SULFURTRANSFERASE-RELATED"/>
    <property type="match status" value="1"/>
</dbReference>
<dbReference type="Pfam" id="PF01171">
    <property type="entry name" value="ATP_bind_3"/>
    <property type="match status" value="1"/>
</dbReference>
<dbReference type="SUPFAM" id="SSF52402">
    <property type="entry name" value="Adenine nucleotide alpha hydrolases-like"/>
    <property type="match status" value="1"/>
</dbReference>
<gene>
    <name evidence="1" type="primary">ttcA</name>
    <name type="ordered locus">Lcho_0101</name>
</gene>
<accession>B1Y629</accession>
<protein>
    <recommendedName>
        <fullName evidence="1">tRNA-cytidine(32) 2-sulfurtransferase</fullName>
        <ecNumber evidence="1">2.8.1.-</ecNumber>
    </recommendedName>
    <alternativeName>
        <fullName evidence="1">Two-thiocytidine biosynthesis protein A</fullName>
    </alternativeName>
    <alternativeName>
        <fullName evidence="1">tRNA 2-thiocytidine biosynthesis protein TtcA</fullName>
    </alternativeName>
</protein>
<feature type="chain" id="PRO_0000348762" description="tRNA-cytidine(32) 2-sulfurtransferase">
    <location>
        <begin position="1"/>
        <end position="326"/>
    </location>
</feature>
<feature type="short sequence motif" description="PP-loop motif" evidence="1">
    <location>
        <begin position="63"/>
        <end position="68"/>
    </location>
</feature>
<feature type="binding site" evidence="1">
    <location>
        <position position="138"/>
    </location>
    <ligand>
        <name>[4Fe-4S] cluster</name>
        <dbReference type="ChEBI" id="CHEBI:49883"/>
    </ligand>
</feature>
<feature type="binding site" evidence="1">
    <location>
        <position position="141"/>
    </location>
    <ligand>
        <name>[4Fe-4S] cluster</name>
        <dbReference type="ChEBI" id="CHEBI:49883"/>
    </ligand>
</feature>
<feature type="binding site" evidence="1">
    <location>
        <position position="229"/>
    </location>
    <ligand>
        <name>[4Fe-4S] cluster</name>
        <dbReference type="ChEBI" id="CHEBI:49883"/>
    </ligand>
</feature>
<reference key="1">
    <citation type="submission" date="2008-03" db="EMBL/GenBank/DDBJ databases">
        <title>Complete sequence of Leptothrix cholodnii SP-6.</title>
        <authorList>
            <consortium name="US DOE Joint Genome Institute"/>
            <person name="Copeland A."/>
            <person name="Lucas S."/>
            <person name="Lapidus A."/>
            <person name="Glavina del Rio T."/>
            <person name="Dalin E."/>
            <person name="Tice H."/>
            <person name="Bruce D."/>
            <person name="Goodwin L."/>
            <person name="Pitluck S."/>
            <person name="Chertkov O."/>
            <person name="Brettin T."/>
            <person name="Detter J.C."/>
            <person name="Han C."/>
            <person name="Kuske C.R."/>
            <person name="Schmutz J."/>
            <person name="Larimer F."/>
            <person name="Land M."/>
            <person name="Hauser L."/>
            <person name="Kyrpides N."/>
            <person name="Lykidis A."/>
            <person name="Emerson D."/>
            <person name="Richardson P."/>
        </authorList>
    </citation>
    <scope>NUCLEOTIDE SEQUENCE [LARGE SCALE GENOMIC DNA]</scope>
    <source>
        <strain>ATCC 51168 / LMG 8142 / SP-6</strain>
    </source>
</reference>